<dbReference type="EC" id="2.3.1.274" evidence="1"/>
<dbReference type="EMBL" id="CP000407">
    <property type="protein sequence ID" value="ABP88996.1"/>
    <property type="molecule type" value="Genomic_DNA"/>
</dbReference>
<dbReference type="SMR" id="A4VSA7"/>
<dbReference type="STRING" id="391295.SSU05_0024"/>
<dbReference type="KEGG" id="ssu:SSU05_0024"/>
<dbReference type="eggNOG" id="COG0416">
    <property type="taxonomic scope" value="Bacteria"/>
</dbReference>
<dbReference type="HOGENOM" id="CLU_039379_1_1_9"/>
<dbReference type="UniPathway" id="UPA00085"/>
<dbReference type="GO" id="GO:0005737">
    <property type="term" value="C:cytoplasm"/>
    <property type="evidence" value="ECO:0007669"/>
    <property type="project" value="UniProtKB-SubCell"/>
</dbReference>
<dbReference type="GO" id="GO:0043811">
    <property type="term" value="F:phosphate:acyl-[acyl carrier protein] acyltransferase activity"/>
    <property type="evidence" value="ECO:0007669"/>
    <property type="project" value="UniProtKB-UniRule"/>
</dbReference>
<dbReference type="GO" id="GO:0006633">
    <property type="term" value="P:fatty acid biosynthetic process"/>
    <property type="evidence" value="ECO:0007669"/>
    <property type="project" value="UniProtKB-UniRule"/>
</dbReference>
<dbReference type="GO" id="GO:0008654">
    <property type="term" value="P:phospholipid biosynthetic process"/>
    <property type="evidence" value="ECO:0007669"/>
    <property type="project" value="UniProtKB-KW"/>
</dbReference>
<dbReference type="Gene3D" id="3.40.718.10">
    <property type="entry name" value="Isopropylmalate Dehydrogenase"/>
    <property type="match status" value="1"/>
</dbReference>
<dbReference type="HAMAP" id="MF_00019">
    <property type="entry name" value="PlsX"/>
    <property type="match status" value="1"/>
</dbReference>
<dbReference type="InterPro" id="IPR003664">
    <property type="entry name" value="FA_synthesis"/>
</dbReference>
<dbReference type="InterPro" id="IPR012281">
    <property type="entry name" value="Phospholipid_synth_PlsX-like"/>
</dbReference>
<dbReference type="NCBIfam" id="TIGR00182">
    <property type="entry name" value="plsX"/>
    <property type="match status" value="1"/>
</dbReference>
<dbReference type="PANTHER" id="PTHR30100">
    <property type="entry name" value="FATTY ACID/PHOSPHOLIPID SYNTHESIS PROTEIN PLSX"/>
    <property type="match status" value="1"/>
</dbReference>
<dbReference type="PANTHER" id="PTHR30100:SF1">
    <property type="entry name" value="PHOSPHATE ACYLTRANSFERASE"/>
    <property type="match status" value="1"/>
</dbReference>
<dbReference type="Pfam" id="PF02504">
    <property type="entry name" value="FA_synthesis"/>
    <property type="match status" value="1"/>
</dbReference>
<dbReference type="PIRSF" id="PIRSF002465">
    <property type="entry name" value="Phsphlp_syn_PlsX"/>
    <property type="match status" value="1"/>
</dbReference>
<dbReference type="SUPFAM" id="SSF53659">
    <property type="entry name" value="Isocitrate/Isopropylmalate dehydrogenase-like"/>
    <property type="match status" value="1"/>
</dbReference>
<organism>
    <name type="scientific">Streptococcus suis (strain 05ZYH33)</name>
    <dbReference type="NCBI Taxonomy" id="391295"/>
    <lineage>
        <taxon>Bacteria</taxon>
        <taxon>Bacillati</taxon>
        <taxon>Bacillota</taxon>
        <taxon>Bacilli</taxon>
        <taxon>Lactobacillales</taxon>
        <taxon>Streptococcaceae</taxon>
        <taxon>Streptococcus</taxon>
    </lineage>
</organism>
<keyword id="KW-0963">Cytoplasm</keyword>
<keyword id="KW-0444">Lipid biosynthesis</keyword>
<keyword id="KW-0443">Lipid metabolism</keyword>
<keyword id="KW-0594">Phospholipid biosynthesis</keyword>
<keyword id="KW-1208">Phospholipid metabolism</keyword>
<keyword id="KW-0808">Transferase</keyword>
<protein>
    <recommendedName>
        <fullName evidence="1">Phosphate acyltransferase</fullName>
        <ecNumber evidence="1">2.3.1.274</ecNumber>
    </recommendedName>
    <alternativeName>
        <fullName evidence="1">Acyl-ACP phosphotransacylase</fullName>
    </alternativeName>
    <alternativeName>
        <fullName evidence="1">Acyl-[acyl-carrier-protein]--phosphate acyltransferase</fullName>
    </alternativeName>
    <alternativeName>
        <fullName evidence="1">Phosphate-acyl-ACP acyltransferase</fullName>
    </alternativeName>
</protein>
<comment type="function">
    <text evidence="1">Catalyzes the reversible formation of acyl-phosphate (acyl-PO(4)) from acyl-[acyl-carrier-protein] (acyl-ACP). This enzyme utilizes acyl-ACP as fatty acyl donor, but not acyl-CoA.</text>
</comment>
<comment type="catalytic activity">
    <reaction evidence="1">
        <text>a fatty acyl-[ACP] + phosphate = an acyl phosphate + holo-[ACP]</text>
        <dbReference type="Rhea" id="RHEA:42292"/>
        <dbReference type="Rhea" id="RHEA-COMP:9685"/>
        <dbReference type="Rhea" id="RHEA-COMP:14125"/>
        <dbReference type="ChEBI" id="CHEBI:43474"/>
        <dbReference type="ChEBI" id="CHEBI:59918"/>
        <dbReference type="ChEBI" id="CHEBI:64479"/>
        <dbReference type="ChEBI" id="CHEBI:138651"/>
        <dbReference type="EC" id="2.3.1.274"/>
    </reaction>
</comment>
<comment type="pathway">
    <text evidence="1">Lipid metabolism; phospholipid metabolism.</text>
</comment>
<comment type="subunit">
    <text evidence="1">Homodimer. Probably interacts with PlsY.</text>
</comment>
<comment type="subcellular location">
    <subcellularLocation>
        <location evidence="1">Cytoplasm</location>
    </subcellularLocation>
    <text evidence="1">Associated with the membrane possibly through PlsY.</text>
</comment>
<comment type="similarity">
    <text evidence="1">Belongs to the PlsX family.</text>
</comment>
<reference key="1">
    <citation type="journal article" date="2007" name="PLoS ONE">
        <title>A glimpse of streptococcal toxic shock syndrome from comparative genomics of S. suis 2 Chinese isolates.</title>
        <authorList>
            <person name="Chen C."/>
            <person name="Tang J."/>
            <person name="Dong W."/>
            <person name="Wang C."/>
            <person name="Feng Y."/>
            <person name="Wang J."/>
            <person name="Zheng F."/>
            <person name="Pan X."/>
            <person name="Liu D."/>
            <person name="Li M."/>
            <person name="Song Y."/>
            <person name="Zhu X."/>
            <person name="Sun H."/>
            <person name="Feng T."/>
            <person name="Guo Z."/>
            <person name="Ju A."/>
            <person name="Ge J."/>
            <person name="Dong Y."/>
            <person name="Sun W."/>
            <person name="Jiang Y."/>
            <person name="Wang J."/>
            <person name="Yan J."/>
            <person name="Yang H."/>
            <person name="Wang X."/>
            <person name="Gao G.F."/>
            <person name="Yang R."/>
            <person name="Wang J."/>
            <person name="Yu J."/>
        </authorList>
    </citation>
    <scope>NUCLEOTIDE SEQUENCE [LARGE SCALE GENOMIC DNA]</scope>
    <source>
        <strain>05ZYH33</strain>
    </source>
</reference>
<name>PLSX_STRSY</name>
<feature type="chain" id="PRO_1000001847" description="Phosphate acyltransferase">
    <location>
        <begin position="1"/>
        <end position="335"/>
    </location>
</feature>
<proteinExistence type="inferred from homology"/>
<accession>A4VSA7</accession>
<gene>
    <name evidence="1" type="primary">plsX</name>
    <name type="ordered locus">SSU05_0024</name>
</gene>
<evidence type="ECO:0000255" key="1">
    <source>
        <dbReference type="HAMAP-Rule" id="MF_00019"/>
    </source>
</evidence>
<sequence length="335" mass="35477">MKRIAVDAMGGDHAPQAVVEGVNQALAAFPDIEIQLYGDEAKIKQYLTATERVSIVHTTEKINSDDEPVKAIRRKKEASMVLATKAVKDGQADAVLSAGNTGALLAAGVFVVGRIKNIDRPGLMSTLPTMDGKGFDMMDLGANAENIAHHLYQYGILGSFYAEHVRGVKQPRVGLLNNGTEDTKGTPVHQEAYKLLAEDKSINFIGNVEARELLNSVADVVVTDGFTGNAVLKTIEGTAKSIVGQLTGSIKNGGLRAKLGGLLVKPTLKKALGAMDYKTAGGAVLLGLKAPVIKAHGSSDAQSIFYTIKQTRSILEAGIVEKSVAKFSVVEESHD</sequence>